<sequence length="483" mass="53753">MQEFTKFPTKTGRRSLSRSISQSSTDSYSSAASYTDSSDDEVSPREKQQTNSKGSSNFCVKNIKQAEFGRREIEIAEQDMSALISLRKRAQGEKPLAGAKIVGCTHITAQTAVLIETLCALGAQCRWSACNIYSTQNEVAAALAEAGVAVFAWKGESEDDFWWCIDRCVNMDGWQANMILDDGGDLTHWVYKKYPNVFKKIRGIVEESVTGVHRLYQLSKAGKLCVPAMNVNDSVTKQKFDNLYCCRESILDGLKRTTDVMFGGKQVVVCGYGEVGKGCCAALKALGAIVYITEIDPICALQACMDGFRVVKLNEVIRQVDVVITCTGNKNVVTREHLDRMKNSCIVCNMGHSNTEIDVTSLRTPELTWERVRSQVDHVIWPDGKRVVLLAEGRLLNLSCSTVPTFVLSITATTQALALIELYNAPEGRYKQDVYLLPKKMDEYVASLHLPSFDAHLTELTDDQAKYLGLNKNGPFKPNYYRY</sequence>
<proteinExistence type="evidence at protein level"/>
<keyword id="KW-1003">Cell membrane</keyword>
<keyword id="KW-0963">Cytoplasm</keyword>
<keyword id="KW-0256">Endoplasmic reticulum</keyword>
<keyword id="KW-0472">Membrane</keyword>
<keyword id="KW-0492">Microsome</keyword>
<keyword id="KW-0520">NAD</keyword>
<keyword id="KW-0554">One-carbon metabolism</keyword>
<keyword id="KW-0597">Phosphoprotein</keyword>
<keyword id="KW-1185">Reference proteome</keyword>
<keyword id="KW-0694">RNA-binding</keyword>
<feature type="chain" id="PRO_0000433356" description="S-adenosylhomocysteine hydrolase-like protein 1">
    <location>
        <begin position="1"/>
        <end position="483"/>
    </location>
</feature>
<feature type="region of interest" description="Disordered" evidence="4">
    <location>
        <begin position="1"/>
        <end position="56"/>
    </location>
</feature>
<feature type="region of interest" description="PEST" evidence="2 3">
    <location>
        <begin position="18"/>
        <end position="45"/>
    </location>
</feature>
<feature type="region of interest" description="Interaction with BCL2L10" evidence="2">
    <location>
        <begin position="91"/>
        <end position="154"/>
    </location>
</feature>
<feature type="region of interest" description="NAD binding" evidence="1">
    <location>
        <begin position="234"/>
        <end position="401"/>
    </location>
</feature>
<feature type="region of interest" description="PDZ-binding" evidence="1">
    <location>
        <begin position="473"/>
        <end position="483"/>
    </location>
</feature>
<feature type="compositionally biased region" description="Low complexity" evidence="4">
    <location>
        <begin position="17"/>
        <end position="36"/>
    </location>
</feature>
<feature type="binding site" evidence="1">
    <location>
        <position position="108"/>
    </location>
    <ligand>
        <name>substrate</name>
    </ligand>
</feature>
<feature type="binding site" evidence="1">
    <location>
        <position position="182"/>
    </location>
    <ligand>
        <name>substrate</name>
    </ligand>
</feature>
<feature type="binding site" evidence="1">
    <location>
        <position position="207"/>
    </location>
    <ligand>
        <name>substrate</name>
    </ligand>
</feature>
<feature type="binding site" evidence="1">
    <location>
        <position position="237"/>
    </location>
    <ligand>
        <name>substrate</name>
    </ligand>
</feature>
<feature type="binding site" evidence="1">
    <location>
        <position position="241"/>
    </location>
    <ligand>
        <name>substrate</name>
    </ligand>
</feature>
<feature type="binding site" evidence="2">
    <location>
        <begin position="271"/>
        <end position="275"/>
    </location>
    <ligand>
        <name>NAD(+)</name>
        <dbReference type="ChEBI" id="CHEBI:57540"/>
    </ligand>
</feature>
<feature type="binding site" evidence="2">
    <location>
        <position position="294"/>
    </location>
    <ligand>
        <name>NAD(+)</name>
        <dbReference type="ChEBI" id="CHEBI:57540"/>
    </ligand>
</feature>
<feature type="binding site" evidence="2">
    <location>
        <position position="329"/>
    </location>
    <ligand>
        <name>NAD(+)</name>
        <dbReference type="ChEBI" id="CHEBI:57540"/>
    </ligand>
</feature>
<feature type="binding site" evidence="2">
    <location>
        <begin position="350"/>
        <end position="352"/>
    </location>
    <ligand>
        <name>NAD(+)</name>
        <dbReference type="ChEBI" id="CHEBI:57540"/>
    </ligand>
</feature>
<feature type="modified residue" description="Phosphoserine; by PKD" evidence="2">
    <location>
        <position position="21"/>
    </location>
</feature>
<feature type="modified residue" description="Phosphoserine" evidence="2">
    <location>
        <position position="24"/>
    </location>
</feature>
<feature type="modified residue" description="Phosphoserine" evidence="2">
    <location>
        <position position="27"/>
    </location>
</feature>
<feature type="modified residue" description="Phosphoserine" evidence="2">
    <location>
        <position position="30"/>
    </location>
</feature>
<feature type="modified residue" description="Phosphoserine" evidence="3">
    <location>
        <position position="37"/>
    </location>
</feature>
<feature type="modified residue" description="Phosphoserine" evidence="2">
    <location>
        <position position="344"/>
    </location>
</feature>
<name>SAHH2_RAT</name>
<evidence type="ECO:0000250" key="1"/>
<evidence type="ECO:0000250" key="2">
    <source>
        <dbReference type="UniProtKB" id="O43865"/>
    </source>
</evidence>
<evidence type="ECO:0000250" key="3">
    <source>
        <dbReference type="UniProtKB" id="Q80SW1"/>
    </source>
</evidence>
<evidence type="ECO:0000256" key="4">
    <source>
        <dbReference type="SAM" id="MobiDB-lite"/>
    </source>
</evidence>
<evidence type="ECO:0000269" key="5">
    <source>
    </source>
</evidence>
<evidence type="ECO:0000303" key="6">
    <source>
    </source>
</evidence>
<evidence type="ECO:0000305" key="7"/>
<evidence type="ECO:0000312" key="8">
    <source>
        <dbReference type="EMBL" id="AAI69126.1"/>
    </source>
</evidence>
<evidence type="ECO:0000312" key="9">
    <source>
        <dbReference type="RGD" id="1309768"/>
    </source>
</evidence>
<dbReference type="EMBL" id="AABR06019878">
    <property type="status" value="NOT_ANNOTATED_CDS"/>
    <property type="molecule type" value="Genomic_DNA"/>
</dbReference>
<dbReference type="EMBL" id="CH473952">
    <property type="protein sequence ID" value="EDL81885.1"/>
    <property type="status" value="ALT_SEQ"/>
    <property type="molecule type" value="Genomic_DNA"/>
</dbReference>
<dbReference type="EMBL" id="BC169126">
    <property type="protein sequence ID" value="AAI69126.1"/>
    <property type="molecule type" value="mRNA"/>
</dbReference>
<dbReference type="RefSeq" id="NP_001102031.1">
    <property type="nucleotide sequence ID" value="NM_001108561.1"/>
</dbReference>
<dbReference type="RefSeq" id="XP_006233227.1">
    <property type="nucleotide sequence ID" value="XM_006233165.1"/>
</dbReference>
<dbReference type="RefSeq" id="XP_006233228.1">
    <property type="nucleotide sequence ID" value="XM_006233166.5"/>
</dbReference>
<dbReference type="RefSeq" id="XP_008759627.1">
    <property type="nucleotide sequence ID" value="XM_008761405.2"/>
</dbReference>
<dbReference type="SMR" id="B5DFN2"/>
<dbReference type="FunCoup" id="B5DFN2">
    <property type="interactions" value="2286"/>
</dbReference>
<dbReference type="IntAct" id="B5DFN2">
    <property type="interactions" value="3"/>
</dbReference>
<dbReference type="MINT" id="B5DFN2"/>
<dbReference type="STRING" id="10116.ENSRNOP00000072856"/>
<dbReference type="iPTMnet" id="B5DFN2"/>
<dbReference type="PhosphoSitePlus" id="B5DFN2"/>
<dbReference type="jPOST" id="B5DFN2"/>
<dbReference type="PaxDb" id="10116-ENSRNOP00000059145"/>
<dbReference type="GeneID" id="362013"/>
<dbReference type="KEGG" id="rno:362013"/>
<dbReference type="AGR" id="RGD:1309768"/>
<dbReference type="CTD" id="10768"/>
<dbReference type="RGD" id="1309768">
    <property type="gene designation" value="Ahcyl1"/>
</dbReference>
<dbReference type="VEuPathDB" id="HostDB:ENSRNOG00000018569"/>
<dbReference type="eggNOG" id="KOG1370">
    <property type="taxonomic scope" value="Eukaryota"/>
</dbReference>
<dbReference type="InParanoid" id="B5DFN2"/>
<dbReference type="Reactome" id="R-RNO-5578775">
    <property type="pathway name" value="Ion homeostasis"/>
</dbReference>
<dbReference type="PRO" id="PR:B5DFN2"/>
<dbReference type="Proteomes" id="UP000002494">
    <property type="component" value="Chromosome 2"/>
</dbReference>
<dbReference type="Proteomes" id="UP000234681">
    <property type="component" value="Chromosome 2"/>
</dbReference>
<dbReference type="Bgee" id="ENSRNOG00000018569">
    <property type="expression patterns" value="Expressed in cerebellum and 19 other cell types or tissues"/>
</dbReference>
<dbReference type="ExpressionAtlas" id="B5DFN2">
    <property type="expression patterns" value="baseline and differential"/>
</dbReference>
<dbReference type="GO" id="GO:0016324">
    <property type="term" value="C:apical plasma membrane"/>
    <property type="evidence" value="ECO:0000314"/>
    <property type="project" value="UniProtKB"/>
</dbReference>
<dbReference type="GO" id="GO:0005737">
    <property type="term" value="C:cytoplasm"/>
    <property type="evidence" value="ECO:0000314"/>
    <property type="project" value="UniProtKB"/>
</dbReference>
<dbReference type="GO" id="GO:0005829">
    <property type="term" value="C:cytosol"/>
    <property type="evidence" value="ECO:0000266"/>
    <property type="project" value="RGD"/>
</dbReference>
<dbReference type="GO" id="GO:0005783">
    <property type="term" value="C:endoplasmic reticulum"/>
    <property type="evidence" value="ECO:0007669"/>
    <property type="project" value="UniProtKB-SubCell"/>
</dbReference>
<dbReference type="GO" id="GO:0043231">
    <property type="term" value="C:intracellular membrane-bounded organelle"/>
    <property type="evidence" value="ECO:0000266"/>
    <property type="project" value="RGD"/>
</dbReference>
<dbReference type="GO" id="GO:0044233">
    <property type="term" value="C:mitochondria-associated endoplasmic reticulum membrane contact site"/>
    <property type="evidence" value="ECO:0000250"/>
    <property type="project" value="UniProtKB"/>
</dbReference>
<dbReference type="GO" id="GO:0030234">
    <property type="term" value="F:enzyme regulator activity"/>
    <property type="evidence" value="ECO:0000266"/>
    <property type="project" value="RGD"/>
</dbReference>
<dbReference type="GO" id="GO:0042802">
    <property type="term" value="F:identical protein binding"/>
    <property type="evidence" value="ECO:0000266"/>
    <property type="project" value="RGD"/>
</dbReference>
<dbReference type="GO" id="GO:0003723">
    <property type="term" value="F:RNA binding"/>
    <property type="evidence" value="ECO:0007669"/>
    <property type="project" value="UniProtKB-KW"/>
</dbReference>
<dbReference type="GO" id="GO:0038166">
    <property type="term" value="P:angiotensin-activated signaling pathway"/>
    <property type="evidence" value="ECO:0000250"/>
    <property type="project" value="UniProtKB"/>
</dbReference>
<dbReference type="GO" id="GO:0006915">
    <property type="term" value="P:apoptotic process"/>
    <property type="evidence" value="ECO:0000250"/>
    <property type="project" value="UniProtKB"/>
</dbReference>
<dbReference type="GO" id="GO:0042045">
    <property type="term" value="P:epithelial fluid transport"/>
    <property type="evidence" value="ECO:0000266"/>
    <property type="project" value="RGD"/>
</dbReference>
<dbReference type="GO" id="GO:1990456">
    <property type="term" value="P:mitochondrion-endoplasmic reticulum membrane tethering"/>
    <property type="evidence" value="ECO:0000250"/>
    <property type="project" value="UniProtKB"/>
</dbReference>
<dbReference type="GO" id="GO:0006730">
    <property type="term" value="P:one-carbon metabolic process"/>
    <property type="evidence" value="ECO:0007669"/>
    <property type="project" value="UniProtKB-KW"/>
</dbReference>
<dbReference type="GO" id="GO:0010765">
    <property type="term" value="P:positive regulation of sodium ion transport"/>
    <property type="evidence" value="ECO:0000266"/>
    <property type="project" value="RGD"/>
</dbReference>
<dbReference type="GO" id="GO:0006611">
    <property type="term" value="P:protein export from nucleus"/>
    <property type="evidence" value="ECO:0000266"/>
    <property type="project" value="RGD"/>
</dbReference>
<dbReference type="GO" id="GO:0044070">
    <property type="term" value="P:regulation of monoatomic anion transport"/>
    <property type="evidence" value="ECO:0000266"/>
    <property type="project" value="RGD"/>
</dbReference>
<dbReference type="GO" id="GO:0031440">
    <property type="term" value="P:regulation of mRNA 3'-end processing"/>
    <property type="evidence" value="ECO:0000266"/>
    <property type="project" value="RGD"/>
</dbReference>
<dbReference type="GO" id="GO:0051592">
    <property type="term" value="P:response to calcium ion"/>
    <property type="evidence" value="ECO:0000266"/>
    <property type="project" value="RGD"/>
</dbReference>
<dbReference type="GO" id="GO:0033353">
    <property type="term" value="P:S-adenosylmethionine cycle"/>
    <property type="evidence" value="ECO:0000318"/>
    <property type="project" value="GO_Central"/>
</dbReference>
<dbReference type="CDD" id="cd00401">
    <property type="entry name" value="SAHH"/>
    <property type="match status" value="1"/>
</dbReference>
<dbReference type="FunFam" id="3.40.50.1480:FF:000002">
    <property type="entry name" value="Adenosylhomocysteinase"/>
    <property type="match status" value="1"/>
</dbReference>
<dbReference type="FunFam" id="3.40.50.1480:FF:000007">
    <property type="entry name" value="Adenosylhomocysteinase"/>
    <property type="match status" value="1"/>
</dbReference>
<dbReference type="FunFam" id="3.40.50.720:FF:000035">
    <property type="entry name" value="Adenosylhomocysteinase"/>
    <property type="match status" value="1"/>
</dbReference>
<dbReference type="FunFam" id="3.40.50.1480:FF:000009">
    <property type="entry name" value="Adenosylhomocysteinase like 2"/>
    <property type="match status" value="1"/>
</dbReference>
<dbReference type="Gene3D" id="3.40.50.1480">
    <property type="entry name" value="Adenosylhomocysteinase-like"/>
    <property type="match status" value="3"/>
</dbReference>
<dbReference type="Gene3D" id="3.40.50.720">
    <property type="entry name" value="NAD(P)-binding Rossmann-like Domain"/>
    <property type="match status" value="1"/>
</dbReference>
<dbReference type="InterPro" id="IPR042172">
    <property type="entry name" value="Adenosylhomocyst_ase-like_sf"/>
</dbReference>
<dbReference type="InterPro" id="IPR000043">
    <property type="entry name" value="Adenosylhomocysteinase-like"/>
</dbReference>
<dbReference type="InterPro" id="IPR015878">
    <property type="entry name" value="Ado_hCys_hydrolase_NAD-bd"/>
</dbReference>
<dbReference type="InterPro" id="IPR036291">
    <property type="entry name" value="NAD(P)-bd_dom_sf"/>
</dbReference>
<dbReference type="InterPro" id="IPR020082">
    <property type="entry name" value="S-Ado-L-homoCys_hydrolase_CS"/>
</dbReference>
<dbReference type="NCBIfam" id="TIGR00936">
    <property type="entry name" value="ahcY"/>
    <property type="match status" value="1"/>
</dbReference>
<dbReference type="NCBIfam" id="NF004005">
    <property type="entry name" value="PRK05476.2-3"/>
    <property type="match status" value="1"/>
</dbReference>
<dbReference type="PANTHER" id="PTHR23420">
    <property type="entry name" value="ADENOSYLHOMOCYSTEINASE"/>
    <property type="match status" value="1"/>
</dbReference>
<dbReference type="PANTHER" id="PTHR23420:SF3">
    <property type="entry name" value="S-ADENOSYLHOMOCYSTEINE HYDROLASE-LIKE PROTEIN 1"/>
    <property type="match status" value="1"/>
</dbReference>
<dbReference type="Pfam" id="PF05221">
    <property type="entry name" value="AdoHcyase"/>
    <property type="match status" value="1"/>
</dbReference>
<dbReference type="Pfam" id="PF00670">
    <property type="entry name" value="AdoHcyase_NAD"/>
    <property type="match status" value="1"/>
</dbReference>
<dbReference type="PIRSF" id="PIRSF001109">
    <property type="entry name" value="Ad_hcy_hydrolase"/>
    <property type="match status" value="1"/>
</dbReference>
<dbReference type="SMART" id="SM00996">
    <property type="entry name" value="AdoHcyase"/>
    <property type="match status" value="1"/>
</dbReference>
<dbReference type="SMART" id="SM00997">
    <property type="entry name" value="AdoHcyase_NAD"/>
    <property type="match status" value="1"/>
</dbReference>
<dbReference type="SUPFAM" id="SSF52283">
    <property type="entry name" value="Formate/glycerate dehydrogenase catalytic domain-like"/>
    <property type="match status" value="1"/>
</dbReference>
<dbReference type="SUPFAM" id="SSF51735">
    <property type="entry name" value="NAD(P)-binding Rossmann-fold domains"/>
    <property type="match status" value="1"/>
</dbReference>
<dbReference type="PROSITE" id="PS00738">
    <property type="entry name" value="ADOHCYASE_1"/>
    <property type="match status" value="1"/>
</dbReference>
<dbReference type="PROSITE" id="PS00739">
    <property type="entry name" value="ADOHCYASE_2"/>
    <property type="match status" value="1"/>
</dbReference>
<comment type="function">
    <text evidence="2 3 5">Multifaceted cellular regulator which coordinates several essential cellular functions including regulation of epithelial HCO3(-) and fluid secretion, mRNA processing and DNA replication. Regulates ITPR1 sensitivity to inositol 1,4,5-trisphosphate, competing for the common binding site and acting as endogenous 'pseudoligand' whose inhibitory activity can be modulated by its phosphorylation status. Promotes the formation of contact points between the endoplasmic reticulum (ER) and mitochondria, facilitating transfer of Ca(2+) from the ER to mitochondria (By similarity). Under normal cellular conditions, functions cooperatively with BCL2L10 to limit ITPR1-mediated Ca(2+) release but, under apoptotic stress conditions, dephosphorylated which promotes dissociation of both AHCYL1 and BCL2L10 from mitochondria-associated endoplasmic reticulum membranes, inhibits BCL2L10 interaction with ITPR1 and leads to increased Ca(2+) transfer to mitochondria which promotes apoptosis (By similarity). In the pancreatic and salivary ducts, at resting state, attenuates inositol 1,4,5-trisphosphate-induced calcium release by interacting with ITPR1 (By similarity). When extracellular stimuli induce ITPR1 phosphorylation or inositol 1,4,5-trisphosphate production, dissociates from ITPR1 to interact with CFTR and SLC26A6, mediating their synergistic activation by calcium and cAMP that stimulates the epithelial secretion of electrolytes and fluid (By similarity). Also activates basolateral SLC4A4 isoform 1 to coordinate fluid and HCO3(-) secretion (By similarity). Inhibits the effect of STK39 on SLC4A4 and CFTR by recruiting PP1 phosphatase which activates SLC4A4, SLC26A6 and CFTR through dephosphorylation (By similarity). Mediates the induction of SLC9A3 surface expression produced by Angiotensin-2 (PubMed:20584908). Depending on the cell type, activates SLC9A3 in response to calcium or reverses SLC9A3R2-dependent calcium inhibition. May modulate the polyadenylation state of specific mRNAs, both by controlling the subcellular location of FIP1L1 and by inhibiting PAPOLA activity, in response to a stimulus that alters its phosphorylation state. Acts as a (dATP)-dependent inhibitor of ribonucleotide reductase large subunit RRM1, controlling the endogenous dNTP pool and ensuring normal cell cycle progression (By similarity). In vitro does not exhibit any S-adenosyl-L-homocysteine hydrolase activity (By similarity).</text>
</comment>
<comment type="cofactor">
    <cofactor evidence="2">
        <name>NAD(+)</name>
        <dbReference type="ChEBI" id="CHEBI:57540"/>
    </cofactor>
    <text evidence="2">Binds 1 NAD(+) per subunit.</text>
</comment>
<comment type="subunit">
    <text evidence="2 3 5">Forms multimers (By similarity). Forms heteromultimers with AHCYL2 (via the C-terminal region). Interacts (when phosphorylated) with ITPR1 (when not phosphorylated); the interaction suppresses inositol 1,4,5-trisphosphate binding to ITPR1 (By similarity). Interacts with BCL2L10; this strengthens the interaction of AHCYL1 with ITPR1 (By similarity). Interacts with CFTR and SLC26A6; the interactions take place once AHCYL1 is released from ITPR1 and increase CFTR and SLC26A6 activities (By similarity). Interacts with RRM1; in a phosphorylation- and (dATP)-dependent manner. Interacts (via PEST domain when phosphorylated) with SLC4A4 isoform 1 but not isoform 2; the interaction increases SLC4A4 isoform 1 activity. Interacts (when phosphorylated) with SLC9A3; the interaction is required for SLC9A3 apical location and activity (PubMed:20584908). Interacts (when phosphorylated) with FIP1L1; the interaction is direct and associates AHCYL1 with the CPSF complex and RNA. Interacts with PAPOLA (By similarity). Interacts with ZCCHC4 (By similarity). Interacts with AHCY (By similarity).</text>
</comment>
<comment type="subcellular location">
    <subcellularLocation>
        <location evidence="3">Endoplasmic reticulum</location>
    </subcellularLocation>
    <subcellularLocation>
        <location evidence="5">Cytoplasm</location>
        <location evidence="5">Cytosol</location>
    </subcellularLocation>
    <subcellularLocation>
        <location evidence="5">Apical cell membrane</location>
        <topology evidence="7">Peripheral membrane protein</topology>
    </subcellularLocation>
    <subcellularLocation>
        <location evidence="3">Microsome</location>
    </subcellularLocation>
    <text evidence="2">Localizes to mitochondria-associated endoplasmic reticulum membranes (MAMs) (By similarity). Localization to MAMs is greatly reduced under apoptotic stress conditions (By similarity).</text>
</comment>
<comment type="tissue specificity">
    <text evidence="5">Expressed in kidney proximal tubules and outer medulla (at protein level) (PubMed:20584908).</text>
</comment>
<comment type="domain">
    <text evidence="2 3">The PEST region is essential for the interaction with ITPR1, and, when phosphorylated, is also the RRM1-binding region. The PDZ-binding region is required for maximal interaction with ITPR1 and is also responsible for the IP3-insensitive interaction with ITPR1 (By similarity).</text>
</comment>
<comment type="PTM">
    <text evidence="2">Phosphorylated at Ser/Thr residues between Ser-21 and Thr-25 in the PEST region: required for interaction with dATP-bound RRM1 and ITPR1. Phosphorylation at Ser-21 by PRKD1 and CAMK4 is required for further phosphorylations by CSNK1A1. Phosphorylation is induced by oxidative stress. Probably phosphorylated by CAMK2A; phosphorylation at Ser-21 may be required for interaction with SLC9A3. Dephosphorylated in response to apoptotic stress conditions which causes translocation of both AHCYL1 and BCL2L10 from mitochondria-associated endoplasmic reticulum membranes and promotes apoptosis.</text>
</comment>
<comment type="similarity">
    <text evidence="7">Belongs to the adenosylhomocysteinase family.</text>
</comment>
<comment type="caution">
    <text evidence="3">In spite of its similarity with AHCY, which catalyzes the reversible hydrolysis of S-adenosyl-L-homocysteine to adenosine and homocysteine, recombinant AHCYL1 expressed in bacteria shows no hydrolase activity, nor does it affect the enzyme activity of AHCY.</text>
</comment>
<comment type="sequence caution" evidence="7">
    <conflict type="erroneous gene model prediction">
        <sequence resource="EMBL-CDS" id="EDL81885"/>
    </conflict>
</comment>
<gene>
    <name evidence="9" type="primary">Ahcyl1</name>
    <name evidence="6" type="synonym">Irbit</name>
</gene>
<accession>B5DFN2</accession>
<accession>D4A5X8</accession>
<protein>
    <recommendedName>
        <fullName>S-adenosylhomocysteine hydrolase-like protein 1</fullName>
    </recommendedName>
    <alternativeName>
        <fullName>IP3R-binding protein released with inositol 1,4,5-trisphosphate</fullName>
    </alternativeName>
    <alternativeName>
        <fullName>Putative adenosylhomocysteinase 2</fullName>
    </alternativeName>
    <alternativeName>
        <fullName>S-adenosyl-L-homocysteine hydrolase 2</fullName>
        <shortName>AdoHcyase 2</shortName>
    </alternativeName>
</protein>
<organism evidence="8">
    <name type="scientific">Rattus norvegicus</name>
    <name type="common">Rat</name>
    <dbReference type="NCBI Taxonomy" id="10116"/>
    <lineage>
        <taxon>Eukaryota</taxon>
        <taxon>Metazoa</taxon>
        <taxon>Chordata</taxon>
        <taxon>Craniata</taxon>
        <taxon>Vertebrata</taxon>
        <taxon>Euteleostomi</taxon>
        <taxon>Mammalia</taxon>
        <taxon>Eutheria</taxon>
        <taxon>Euarchontoglires</taxon>
        <taxon>Glires</taxon>
        <taxon>Rodentia</taxon>
        <taxon>Myomorpha</taxon>
        <taxon>Muroidea</taxon>
        <taxon>Muridae</taxon>
        <taxon>Murinae</taxon>
        <taxon>Rattus</taxon>
    </lineage>
</organism>
<reference key="1">
    <citation type="journal article" date="2004" name="Nature">
        <title>Genome sequence of the Brown Norway rat yields insights into mammalian evolution.</title>
        <authorList>
            <person name="Gibbs R.A."/>
            <person name="Weinstock G.M."/>
            <person name="Metzker M.L."/>
            <person name="Muzny D.M."/>
            <person name="Sodergren E.J."/>
            <person name="Scherer S."/>
            <person name="Scott G."/>
            <person name="Steffen D."/>
            <person name="Worley K.C."/>
            <person name="Burch P.E."/>
            <person name="Okwuonu G."/>
            <person name="Hines S."/>
            <person name="Lewis L."/>
            <person name="Deramo C."/>
            <person name="Delgado O."/>
            <person name="Dugan-Rocha S."/>
            <person name="Miner G."/>
            <person name="Morgan M."/>
            <person name="Hawes A."/>
            <person name="Gill R."/>
            <person name="Holt R.A."/>
            <person name="Adams M.D."/>
            <person name="Amanatides P.G."/>
            <person name="Baden-Tillson H."/>
            <person name="Barnstead M."/>
            <person name="Chin S."/>
            <person name="Evans C.A."/>
            <person name="Ferriera S."/>
            <person name="Fosler C."/>
            <person name="Glodek A."/>
            <person name="Gu Z."/>
            <person name="Jennings D."/>
            <person name="Kraft C.L."/>
            <person name="Nguyen T."/>
            <person name="Pfannkoch C.M."/>
            <person name="Sitter C."/>
            <person name="Sutton G.G."/>
            <person name="Venter J.C."/>
            <person name="Woodage T."/>
            <person name="Smith D."/>
            <person name="Lee H.-M."/>
            <person name="Gustafson E."/>
            <person name="Cahill P."/>
            <person name="Kana A."/>
            <person name="Doucette-Stamm L."/>
            <person name="Weinstock K."/>
            <person name="Fechtel K."/>
            <person name="Weiss R.B."/>
            <person name="Dunn D.M."/>
            <person name="Green E.D."/>
            <person name="Blakesley R.W."/>
            <person name="Bouffard G.G."/>
            <person name="De Jong P.J."/>
            <person name="Osoegawa K."/>
            <person name="Zhu B."/>
            <person name="Marra M."/>
            <person name="Schein J."/>
            <person name="Bosdet I."/>
            <person name="Fjell C."/>
            <person name="Jones S."/>
            <person name="Krzywinski M."/>
            <person name="Mathewson C."/>
            <person name="Siddiqui A."/>
            <person name="Wye N."/>
            <person name="McPherson J."/>
            <person name="Zhao S."/>
            <person name="Fraser C.M."/>
            <person name="Shetty J."/>
            <person name="Shatsman S."/>
            <person name="Geer K."/>
            <person name="Chen Y."/>
            <person name="Abramzon S."/>
            <person name="Nierman W.C."/>
            <person name="Havlak P.H."/>
            <person name="Chen R."/>
            <person name="Durbin K.J."/>
            <person name="Egan A."/>
            <person name="Ren Y."/>
            <person name="Song X.-Z."/>
            <person name="Li B."/>
            <person name="Liu Y."/>
            <person name="Qin X."/>
            <person name="Cawley S."/>
            <person name="Cooney A.J."/>
            <person name="D'Souza L.M."/>
            <person name="Martin K."/>
            <person name="Wu J.Q."/>
            <person name="Gonzalez-Garay M.L."/>
            <person name="Jackson A.R."/>
            <person name="Kalafus K.J."/>
            <person name="McLeod M.P."/>
            <person name="Milosavljevic A."/>
            <person name="Virk D."/>
            <person name="Volkov A."/>
            <person name="Wheeler D.A."/>
            <person name="Zhang Z."/>
            <person name="Bailey J.A."/>
            <person name="Eichler E.E."/>
            <person name="Tuzun E."/>
            <person name="Birney E."/>
            <person name="Mongin E."/>
            <person name="Ureta-Vidal A."/>
            <person name="Woodwark C."/>
            <person name="Zdobnov E."/>
            <person name="Bork P."/>
            <person name="Suyama M."/>
            <person name="Torrents D."/>
            <person name="Alexandersson M."/>
            <person name="Trask B.J."/>
            <person name="Young J.M."/>
            <person name="Huang H."/>
            <person name="Wang H."/>
            <person name="Xing H."/>
            <person name="Daniels S."/>
            <person name="Gietzen D."/>
            <person name="Schmidt J."/>
            <person name="Stevens K."/>
            <person name="Vitt U."/>
            <person name="Wingrove J."/>
            <person name="Camara F."/>
            <person name="Mar Alba M."/>
            <person name="Abril J.F."/>
            <person name="Guigo R."/>
            <person name="Smit A."/>
            <person name="Dubchak I."/>
            <person name="Rubin E.M."/>
            <person name="Couronne O."/>
            <person name="Poliakov A."/>
            <person name="Huebner N."/>
            <person name="Ganten D."/>
            <person name="Goesele C."/>
            <person name="Hummel O."/>
            <person name="Kreitler T."/>
            <person name="Lee Y.-A."/>
            <person name="Monti J."/>
            <person name="Schulz H."/>
            <person name="Zimdahl H."/>
            <person name="Himmelbauer H."/>
            <person name="Lehrach H."/>
            <person name="Jacob H.J."/>
            <person name="Bromberg S."/>
            <person name="Gullings-Handley J."/>
            <person name="Jensen-Seaman M.I."/>
            <person name="Kwitek A.E."/>
            <person name="Lazar J."/>
            <person name="Pasko D."/>
            <person name="Tonellato P.J."/>
            <person name="Twigger S."/>
            <person name="Ponting C.P."/>
            <person name="Duarte J.M."/>
            <person name="Rice S."/>
            <person name="Goodstadt L."/>
            <person name="Beatson S.A."/>
            <person name="Emes R.D."/>
            <person name="Winter E.E."/>
            <person name="Webber C."/>
            <person name="Brandt P."/>
            <person name="Nyakatura G."/>
            <person name="Adetobi M."/>
            <person name="Chiaromonte F."/>
            <person name="Elnitski L."/>
            <person name="Eswara P."/>
            <person name="Hardison R.C."/>
            <person name="Hou M."/>
            <person name="Kolbe D."/>
            <person name="Makova K."/>
            <person name="Miller W."/>
            <person name="Nekrutenko A."/>
            <person name="Riemer C."/>
            <person name="Schwartz S."/>
            <person name="Taylor J."/>
            <person name="Yang S."/>
            <person name="Zhang Y."/>
            <person name="Lindpaintner K."/>
            <person name="Andrews T.D."/>
            <person name="Caccamo M."/>
            <person name="Clamp M."/>
            <person name="Clarke L."/>
            <person name="Curwen V."/>
            <person name="Durbin R.M."/>
            <person name="Eyras E."/>
            <person name="Searle S.M."/>
            <person name="Cooper G.M."/>
            <person name="Batzoglou S."/>
            <person name="Brudno M."/>
            <person name="Sidow A."/>
            <person name="Stone E.A."/>
            <person name="Payseur B.A."/>
            <person name="Bourque G."/>
            <person name="Lopez-Otin C."/>
            <person name="Puente X.S."/>
            <person name="Chakrabarti K."/>
            <person name="Chatterji S."/>
            <person name="Dewey C."/>
            <person name="Pachter L."/>
            <person name="Bray N."/>
            <person name="Yap V.B."/>
            <person name="Caspi A."/>
            <person name="Tesler G."/>
            <person name="Pevzner P.A."/>
            <person name="Haussler D."/>
            <person name="Roskin K.M."/>
            <person name="Baertsch R."/>
            <person name="Clawson H."/>
            <person name="Furey T.S."/>
            <person name="Hinrichs A.S."/>
            <person name="Karolchik D."/>
            <person name="Kent W.J."/>
            <person name="Rosenbloom K.R."/>
            <person name="Trumbower H."/>
            <person name="Weirauch M."/>
            <person name="Cooper D.N."/>
            <person name="Stenson P.D."/>
            <person name="Ma B."/>
            <person name="Brent M."/>
            <person name="Arumugam M."/>
            <person name="Shteynberg D."/>
            <person name="Copley R.R."/>
            <person name="Taylor M.S."/>
            <person name="Riethman H."/>
            <person name="Mudunuri U."/>
            <person name="Peterson J."/>
            <person name="Guyer M."/>
            <person name="Felsenfeld A."/>
            <person name="Old S."/>
            <person name="Mockrin S."/>
            <person name="Collins F.S."/>
        </authorList>
    </citation>
    <scope>NUCLEOTIDE SEQUENCE [LARGE SCALE GENOMIC DNA]</scope>
    <source>
        <strain>Brown Norway</strain>
    </source>
</reference>
<reference key="2">
    <citation type="submission" date="2005-07" db="EMBL/GenBank/DDBJ databases">
        <authorList>
            <person name="Mural R.J."/>
            <person name="Adams M.D."/>
            <person name="Myers E.W."/>
            <person name="Smith H.O."/>
            <person name="Venter J.C."/>
        </authorList>
    </citation>
    <scope>NUCLEOTIDE SEQUENCE [LARGE SCALE GENOMIC DNA]</scope>
</reference>
<reference key="3">
    <citation type="journal article" date="2004" name="Genome Res.">
        <title>The status, quality, and expansion of the NIH full-length cDNA project: the Mammalian Gene Collection (MGC).</title>
        <authorList>
            <consortium name="The MGC Project Team"/>
        </authorList>
    </citation>
    <scope>NUCLEOTIDE SEQUENCE [LARGE SCALE MRNA] OF 2-483</scope>
    <source>
        <tissue>Pituitary</tissue>
    </source>
</reference>
<reference key="4">
    <citation type="journal article" date="2010" name="J. Biol. Chem.">
        <title>Activation of Na+/H+ exchanger NHE3 by angiotensin II is mediated by inositol 1,4,5-triphosphate (IP3) receptor-binding protein released with IP3 (IRBIT) and Ca2+/calmodulin-dependent protein kinase II.</title>
        <authorList>
            <person name="He P."/>
            <person name="Klein J."/>
            <person name="Yun C.C."/>
        </authorList>
    </citation>
    <scope>FUNCTION</scope>
    <scope>TISSUE SPECIFICITY</scope>
    <scope>INTERACTION WITH SLC9A3</scope>
</reference>